<evidence type="ECO:0000255" key="1">
    <source>
        <dbReference type="HAMAP-Rule" id="MF_01366"/>
    </source>
</evidence>
<evidence type="ECO:0000305" key="2"/>
<reference key="1">
    <citation type="journal article" date="1999" name="Nat. Genet.">
        <title>Comparative genomes of Chlamydia pneumoniae and C. trachomatis.</title>
        <authorList>
            <person name="Kalman S."/>
            <person name="Mitchell W.P."/>
            <person name="Marathe R."/>
            <person name="Lammel C.J."/>
            <person name="Fan J."/>
            <person name="Hyman R.W."/>
            <person name="Olinger L."/>
            <person name="Grimwood J."/>
            <person name="Davis R.W."/>
            <person name="Stephens R.S."/>
        </authorList>
    </citation>
    <scope>NUCLEOTIDE SEQUENCE [LARGE SCALE GENOMIC DNA]</scope>
    <source>
        <strain>CWL029</strain>
    </source>
</reference>
<reference key="2">
    <citation type="journal article" date="2000" name="Nucleic Acids Res.">
        <title>Genome sequences of Chlamydia trachomatis MoPn and Chlamydia pneumoniae AR39.</title>
        <authorList>
            <person name="Read T.D."/>
            <person name="Brunham R.C."/>
            <person name="Shen C."/>
            <person name="Gill S.R."/>
            <person name="Heidelberg J.F."/>
            <person name="White O."/>
            <person name="Hickey E.K."/>
            <person name="Peterson J.D."/>
            <person name="Utterback T.R."/>
            <person name="Berry K.J."/>
            <person name="Bass S."/>
            <person name="Linher K.D."/>
            <person name="Weidman J.F."/>
            <person name="Khouri H.M."/>
            <person name="Craven B."/>
            <person name="Bowman C."/>
            <person name="Dodson R.J."/>
            <person name="Gwinn M.L."/>
            <person name="Nelson W.C."/>
            <person name="DeBoy R.T."/>
            <person name="Kolonay J.F."/>
            <person name="McClarty G."/>
            <person name="Salzberg S.L."/>
            <person name="Eisen J.A."/>
            <person name="Fraser C.M."/>
        </authorList>
    </citation>
    <scope>NUCLEOTIDE SEQUENCE [LARGE SCALE GENOMIC DNA]</scope>
    <source>
        <strain>AR39</strain>
    </source>
</reference>
<reference key="3">
    <citation type="journal article" date="2000" name="Nucleic Acids Res.">
        <title>Comparison of whole genome sequences of Chlamydia pneumoniae J138 from Japan and CWL029 from USA.</title>
        <authorList>
            <person name="Shirai M."/>
            <person name="Hirakawa H."/>
            <person name="Kimoto M."/>
            <person name="Tabuchi M."/>
            <person name="Kishi F."/>
            <person name="Ouchi K."/>
            <person name="Shiba T."/>
            <person name="Ishii K."/>
            <person name="Hattori M."/>
            <person name="Kuhara S."/>
            <person name="Nakazawa T."/>
        </authorList>
    </citation>
    <scope>NUCLEOTIDE SEQUENCE [LARGE SCALE GENOMIC DNA]</scope>
    <source>
        <strain>J138</strain>
    </source>
</reference>
<reference key="4">
    <citation type="submission" date="2002-05" db="EMBL/GenBank/DDBJ databases">
        <title>The genome sequence of Chlamydia pneumoniae TW183 and comparison with other Chlamydia strains based on whole genome sequence analysis.</title>
        <authorList>
            <person name="Geng M.M."/>
            <person name="Schuhmacher A."/>
            <person name="Muehldorfer I."/>
            <person name="Bensch K.W."/>
            <person name="Schaefer K.P."/>
            <person name="Schneider S."/>
            <person name="Pohl T."/>
            <person name="Essig A."/>
            <person name="Marre R."/>
            <person name="Melchers K."/>
        </authorList>
    </citation>
    <scope>NUCLEOTIDE SEQUENCE [LARGE SCALE GENOMIC DNA]</scope>
    <source>
        <strain>TW-183</strain>
    </source>
</reference>
<keyword id="KW-0687">Ribonucleoprotein</keyword>
<keyword id="KW-0689">Ribosomal protein</keyword>
<protein>
    <recommendedName>
        <fullName evidence="1">Large ribosomal subunit protein uL13</fullName>
    </recommendedName>
    <alternativeName>
        <fullName evidence="2">50S ribosomal protein L13</fullName>
    </alternativeName>
</protein>
<sequence length="149" mass="16940">MEKRKDTKTTIVKSSETTKSWYVVDAAGKTLGRLSSEVAKILRGKHKVTYTPHVAMGDGVIVINAEKVRLTGAKKGQKIYRYYTGYISGMREIPFENMMARKPNYIIEHAIKGMMPRTRLGKKQLKSLRIVKGDSYETFESQKPILLDI</sequence>
<gene>
    <name evidence="1" type="primary">rplM</name>
    <name type="synonym">rl13</name>
    <name type="ordered locus">CPn_0247</name>
    <name type="ordered locus">CP_0515</name>
    <name type="ordered locus">CpB0254</name>
</gene>
<comment type="function">
    <text evidence="1">This protein is one of the early assembly proteins of the 50S ribosomal subunit, although it is not seen to bind rRNA by itself. It is important during the early stages of 50S assembly.</text>
</comment>
<comment type="subunit">
    <text evidence="1">Part of the 50S ribosomal subunit.</text>
</comment>
<comment type="similarity">
    <text evidence="1">Belongs to the universal ribosomal protein uL13 family.</text>
</comment>
<feature type="chain" id="PRO_0000133731" description="Large ribosomal subunit protein uL13">
    <location>
        <begin position="1"/>
        <end position="149"/>
    </location>
</feature>
<accession>Q9Z8T7</accession>
<accession>Q9JQC2</accession>
<dbReference type="EMBL" id="AE001363">
    <property type="protein sequence ID" value="AAD18400.1"/>
    <property type="molecule type" value="Genomic_DNA"/>
</dbReference>
<dbReference type="EMBL" id="AE002161">
    <property type="protein sequence ID" value="AAF38342.1"/>
    <property type="molecule type" value="Genomic_DNA"/>
</dbReference>
<dbReference type="EMBL" id="BA000008">
    <property type="protein sequence ID" value="BAA98457.1"/>
    <property type="molecule type" value="Genomic_DNA"/>
</dbReference>
<dbReference type="EMBL" id="AE009440">
    <property type="protein sequence ID" value="AAP98187.1"/>
    <property type="molecule type" value="Genomic_DNA"/>
</dbReference>
<dbReference type="PIR" id="C72101">
    <property type="entry name" value="C72101"/>
</dbReference>
<dbReference type="PIR" id="G86521">
    <property type="entry name" value="G86521"/>
</dbReference>
<dbReference type="RefSeq" id="NP_224456.1">
    <property type="nucleotide sequence ID" value="NC_000922.1"/>
</dbReference>
<dbReference type="RefSeq" id="WP_010882899.1">
    <property type="nucleotide sequence ID" value="NZ_LN847257.1"/>
</dbReference>
<dbReference type="SMR" id="Q9Z8T7"/>
<dbReference type="STRING" id="406984.CPK_ORF00758"/>
<dbReference type="GeneID" id="45050294"/>
<dbReference type="KEGG" id="cpa:CP_0515"/>
<dbReference type="KEGG" id="cpj:rl13"/>
<dbReference type="KEGG" id="cpn:CPn_0247"/>
<dbReference type="KEGG" id="cpt:CpB0254"/>
<dbReference type="PATRIC" id="fig|115713.3.peg.279"/>
<dbReference type="eggNOG" id="COG0102">
    <property type="taxonomic scope" value="Bacteria"/>
</dbReference>
<dbReference type="HOGENOM" id="CLU_082184_2_2_0"/>
<dbReference type="OrthoDB" id="9801330at2"/>
<dbReference type="Proteomes" id="UP000000583">
    <property type="component" value="Chromosome"/>
</dbReference>
<dbReference type="Proteomes" id="UP000000801">
    <property type="component" value="Chromosome"/>
</dbReference>
<dbReference type="GO" id="GO:0022625">
    <property type="term" value="C:cytosolic large ribosomal subunit"/>
    <property type="evidence" value="ECO:0007669"/>
    <property type="project" value="TreeGrafter"/>
</dbReference>
<dbReference type="GO" id="GO:0003729">
    <property type="term" value="F:mRNA binding"/>
    <property type="evidence" value="ECO:0007669"/>
    <property type="project" value="TreeGrafter"/>
</dbReference>
<dbReference type="GO" id="GO:0003735">
    <property type="term" value="F:structural constituent of ribosome"/>
    <property type="evidence" value="ECO:0007669"/>
    <property type="project" value="InterPro"/>
</dbReference>
<dbReference type="GO" id="GO:0017148">
    <property type="term" value="P:negative regulation of translation"/>
    <property type="evidence" value="ECO:0007669"/>
    <property type="project" value="TreeGrafter"/>
</dbReference>
<dbReference type="GO" id="GO:0006412">
    <property type="term" value="P:translation"/>
    <property type="evidence" value="ECO:0007669"/>
    <property type="project" value="UniProtKB-UniRule"/>
</dbReference>
<dbReference type="CDD" id="cd00392">
    <property type="entry name" value="Ribosomal_L13"/>
    <property type="match status" value="1"/>
</dbReference>
<dbReference type="Gene3D" id="3.90.1180.10">
    <property type="entry name" value="Ribosomal protein L13"/>
    <property type="match status" value="1"/>
</dbReference>
<dbReference type="HAMAP" id="MF_01366">
    <property type="entry name" value="Ribosomal_uL13"/>
    <property type="match status" value="1"/>
</dbReference>
<dbReference type="InterPro" id="IPR005822">
    <property type="entry name" value="Ribosomal_uL13"/>
</dbReference>
<dbReference type="InterPro" id="IPR005823">
    <property type="entry name" value="Ribosomal_uL13_bac-type"/>
</dbReference>
<dbReference type="InterPro" id="IPR036899">
    <property type="entry name" value="Ribosomal_uL13_sf"/>
</dbReference>
<dbReference type="NCBIfam" id="TIGR01066">
    <property type="entry name" value="rplM_bact"/>
    <property type="match status" value="1"/>
</dbReference>
<dbReference type="PANTHER" id="PTHR11545:SF2">
    <property type="entry name" value="LARGE RIBOSOMAL SUBUNIT PROTEIN UL13M"/>
    <property type="match status" value="1"/>
</dbReference>
<dbReference type="PANTHER" id="PTHR11545">
    <property type="entry name" value="RIBOSOMAL PROTEIN L13"/>
    <property type="match status" value="1"/>
</dbReference>
<dbReference type="Pfam" id="PF00572">
    <property type="entry name" value="Ribosomal_L13"/>
    <property type="match status" value="1"/>
</dbReference>
<dbReference type="PIRSF" id="PIRSF002181">
    <property type="entry name" value="Ribosomal_L13"/>
    <property type="match status" value="1"/>
</dbReference>
<dbReference type="SUPFAM" id="SSF52161">
    <property type="entry name" value="Ribosomal protein L13"/>
    <property type="match status" value="1"/>
</dbReference>
<organism>
    <name type="scientific">Chlamydia pneumoniae</name>
    <name type="common">Chlamydophila pneumoniae</name>
    <dbReference type="NCBI Taxonomy" id="83558"/>
    <lineage>
        <taxon>Bacteria</taxon>
        <taxon>Pseudomonadati</taxon>
        <taxon>Chlamydiota</taxon>
        <taxon>Chlamydiia</taxon>
        <taxon>Chlamydiales</taxon>
        <taxon>Chlamydiaceae</taxon>
        <taxon>Chlamydia/Chlamydophila group</taxon>
        <taxon>Chlamydia</taxon>
    </lineage>
</organism>
<proteinExistence type="inferred from homology"/>
<name>RL13_CHLPN</name>